<feature type="chain" id="PRO_0000230241" description="Glycogen synthase 1">
    <location>
        <begin position="1"/>
        <end position="502"/>
    </location>
</feature>
<feature type="binding site" evidence="1">
    <location>
        <position position="18"/>
    </location>
    <ligand>
        <name>ADP-alpha-D-glucose</name>
        <dbReference type="ChEBI" id="CHEBI:57498"/>
    </ligand>
</feature>
<name>GLGA1_GEOMG</name>
<evidence type="ECO:0000255" key="1">
    <source>
        <dbReference type="HAMAP-Rule" id="MF_00484"/>
    </source>
</evidence>
<reference key="1">
    <citation type="journal article" date="2009" name="BMC Microbiol.">
        <title>The genome sequence of Geobacter metallireducens: features of metabolism, physiology and regulation common and dissimilar to Geobacter sulfurreducens.</title>
        <authorList>
            <person name="Aklujkar M."/>
            <person name="Krushkal J."/>
            <person name="DiBartolo G."/>
            <person name="Lapidus A."/>
            <person name="Land M.L."/>
            <person name="Lovley D.R."/>
        </authorList>
    </citation>
    <scope>NUCLEOTIDE SEQUENCE [LARGE SCALE GENOMIC DNA]</scope>
    <source>
        <strain>ATCC 53774 / DSM 7210 / GS-15</strain>
    </source>
</reference>
<protein>
    <recommendedName>
        <fullName evidence="1">Glycogen synthase 1</fullName>
        <ecNumber evidence="1">2.4.1.21</ecNumber>
    </recommendedName>
    <alternativeName>
        <fullName evidence="1">Starch [bacterial glycogen] synthase 1</fullName>
    </alternativeName>
</protein>
<gene>
    <name evidence="1" type="primary">glgA1</name>
    <name type="ordered locus">Gmet_0707</name>
</gene>
<keyword id="KW-0320">Glycogen biosynthesis</keyword>
<keyword id="KW-0328">Glycosyltransferase</keyword>
<keyword id="KW-1185">Reference proteome</keyword>
<keyword id="KW-0808">Transferase</keyword>
<organism>
    <name type="scientific">Geobacter metallireducens (strain ATCC 53774 / DSM 7210 / GS-15)</name>
    <dbReference type="NCBI Taxonomy" id="269799"/>
    <lineage>
        <taxon>Bacteria</taxon>
        <taxon>Pseudomonadati</taxon>
        <taxon>Thermodesulfobacteriota</taxon>
        <taxon>Desulfuromonadia</taxon>
        <taxon>Geobacterales</taxon>
        <taxon>Geobacteraceae</taxon>
        <taxon>Geobacter</taxon>
    </lineage>
</organism>
<comment type="function">
    <text evidence="1">Synthesizes alpha-1,4-glucan chains using ADP-glucose.</text>
</comment>
<comment type="catalytic activity">
    <reaction evidence="1">
        <text>[(1-&gt;4)-alpha-D-glucosyl](n) + ADP-alpha-D-glucose = [(1-&gt;4)-alpha-D-glucosyl](n+1) + ADP + H(+)</text>
        <dbReference type="Rhea" id="RHEA:18189"/>
        <dbReference type="Rhea" id="RHEA-COMP:9584"/>
        <dbReference type="Rhea" id="RHEA-COMP:9587"/>
        <dbReference type="ChEBI" id="CHEBI:15378"/>
        <dbReference type="ChEBI" id="CHEBI:15444"/>
        <dbReference type="ChEBI" id="CHEBI:57498"/>
        <dbReference type="ChEBI" id="CHEBI:456216"/>
        <dbReference type="EC" id="2.4.1.21"/>
    </reaction>
</comment>
<comment type="pathway">
    <text evidence="1">Glycan biosynthesis; glycogen biosynthesis.</text>
</comment>
<comment type="similarity">
    <text evidence="1">Belongs to the glycosyltransferase 1 family. Bacterial/plant glycogen synthase subfamily.</text>
</comment>
<dbReference type="EC" id="2.4.1.21" evidence="1"/>
<dbReference type="EMBL" id="CP000148">
    <property type="protein sequence ID" value="ABB30949.1"/>
    <property type="molecule type" value="Genomic_DNA"/>
</dbReference>
<dbReference type="RefSeq" id="WP_004514099.1">
    <property type="nucleotide sequence ID" value="NC_007517.1"/>
</dbReference>
<dbReference type="SMR" id="Q39XS5"/>
<dbReference type="STRING" id="269799.Gmet_0707"/>
<dbReference type="CAZy" id="GT5">
    <property type="family name" value="Glycosyltransferase Family 5"/>
</dbReference>
<dbReference type="KEGG" id="gme:Gmet_0707"/>
<dbReference type="eggNOG" id="COG0297">
    <property type="taxonomic scope" value="Bacteria"/>
</dbReference>
<dbReference type="HOGENOM" id="CLU_009583_18_2_7"/>
<dbReference type="UniPathway" id="UPA00164"/>
<dbReference type="Proteomes" id="UP000007073">
    <property type="component" value="Chromosome"/>
</dbReference>
<dbReference type="GO" id="GO:0005829">
    <property type="term" value="C:cytosol"/>
    <property type="evidence" value="ECO:0007669"/>
    <property type="project" value="TreeGrafter"/>
</dbReference>
<dbReference type="GO" id="GO:0009011">
    <property type="term" value="F:alpha-1,4-glucan glucosyltransferase (ADP-glucose donor) activity"/>
    <property type="evidence" value="ECO:0007669"/>
    <property type="project" value="UniProtKB-UniRule"/>
</dbReference>
<dbReference type="GO" id="GO:0004373">
    <property type="term" value="F:alpha-1,4-glucan glucosyltransferase (UDP-glucose donor) activity"/>
    <property type="evidence" value="ECO:0007669"/>
    <property type="project" value="InterPro"/>
</dbReference>
<dbReference type="GO" id="GO:0005978">
    <property type="term" value="P:glycogen biosynthetic process"/>
    <property type="evidence" value="ECO:0007669"/>
    <property type="project" value="UniProtKB-UniRule"/>
</dbReference>
<dbReference type="CDD" id="cd03791">
    <property type="entry name" value="GT5_Glycogen_synthase_DULL1-like"/>
    <property type="match status" value="1"/>
</dbReference>
<dbReference type="Gene3D" id="3.40.50.2000">
    <property type="entry name" value="Glycogen Phosphorylase B"/>
    <property type="match status" value="2"/>
</dbReference>
<dbReference type="HAMAP" id="MF_00484">
    <property type="entry name" value="Glycogen_synth"/>
    <property type="match status" value="1"/>
</dbReference>
<dbReference type="InterPro" id="IPR001296">
    <property type="entry name" value="Glyco_trans_1"/>
</dbReference>
<dbReference type="InterPro" id="IPR011835">
    <property type="entry name" value="GS/SS"/>
</dbReference>
<dbReference type="InterPro" id="IPR013534">
    <property type="entry name" value="Starch_synth_cat_dom"/>
</dbReference>
<dbReference type="NCBIfam" id="TIGR02095">
    <property type="entry name" value="glgA"/>
    <property type="match status" value="1"/>
</dbReference>
<dbReference type="PANTHER" id="PTHR45825:SF11">
    <property type="entry name" value="ALPHA AMYLASE DOMAIN-CONTAINING PROTEIN"/>
    <property type="match status" value="1"/>
</dbReference>
<dbReference type="PANTHER" id="PTHR45825">
    <property type="entry name" value="GRANULE-BOUND STARCH SYNTHASE 1, CHLOROPLASTIC/AMYLOPLASTIC"/>
    <property type="match status" value="1"/>
</dbReference>
<dbReference type="Pfam" id="PF08323">
    <property type="entry name" value="Glyco_transf_5"/>
    <property type="match status" value="1"/>
</dbReference>
<dbReference type="Pfam" id="PF00534">
    <property type="entry name" value="Glycos_transf_1"/>
    <property type="match status" value="1"/>
</dbReference>
<dbReference type="SUPFAM" id="SSF53756">
    <property type="entry name" value="UDP-Glycosyltransferase/glycogen phosphorylase"/>
    <property type="match status" value="1"/>
</dbReference>
<accession>Q39XS5</accession>
<proteinExistence type="inferred from homology"/>
<sequence>MKKLKILMAASECVPFAKEGGLADVVGVLPKHLARMGHDVRVVMPRYKRVDRERYGLKQLPGVLVVPMGVIGNQYCGVWEGRIPGSDVPVYFLEHEGYYDRDGLYEVNNEGFLDNDNRFVFLSKAALELPKMIGFEPDLLHAHDWHTAAIPVLVNTTYAADPYVGGKATVLSVHNMQHQGNFYEGLMDVLGIGWEHFTFLGLENNGEANLLKGGLYHATVLNTVSEGYAREMQTPEYGWGLDGVVRERAADLYGILNGVDYEDWNPEVDPYIAARYSAADLSGKKLCKRDLQRTFGLPERDDVPLFGMVSRLVKQKGVDILAEAIHRILALDVQFVMLGAGEPWTHFYFGDIKNAYPDKFNIFVGYNNPLSHQIEAGADFFLMPSAFEPCGLNQMYSLRYGTLPIVRATGGLDDSVENFDEKTLVGTGFKFWSRDAGALFDTVGWAVHTWYHRKDAMERLIANAMAKRFTWEDAAARYEDLYGRALRKRLGEKEFARRYGKG</sequence>